<evidence type="ECO:0000269" key="1">
    <source>
    </source>
</evidence>
<evidence type="ECO:0000303" key="2">
    <source>
    </source>
</evidence>
<evidence type="ECO:0000305" key="3"/>
<evidence type="ECO:0000312" key="4">
    <source>
        <dbReference type="EMBL" id="CXYK01000012"/>
    </source>
</evidence>
<evidence type="ECO:0000312" key="5">
    <source>
        <dbReference type="EMBL" id="Z12832"/>
    </source>
</evidence>
<accession>P0DV93</accession>
<dbReference type="EMBL" id="CXYK01000012">
    <property type="status" value="NOT_ANNOTATED_CDS"/>
    <property type="molecule type" value="Genomic_DNA"/>
</dbReference>
<dbReference type="EMBL" id="Z12832">
    <property type="status" value="NOT_ANNOTATED_CDS"/>
    <property type="molecule type" value="Genomic_DNA"/>
</dbReference>
<dbReference type="SMR" id="P0DV93"/>
<dbReference type="GO" id="GO:0004519">
    <property type="term" value="F:endonuclease activity"/>
    <property type="evidence" value="ECO:0007669"/>
    <property type="project" value="UniProtKB-KW"/>
</dbReference>
<dbReference type="GO" id="GO:0051607">
    <property type="term" value="P:defense response to virus"/>
    <property type="evidence" value="ECO:0007669"/>
    <property type="project" value="UniProtKB-KW"/>
</dbReference>
<dbReference type="InterPro" id="IPR013467">
    <property type="entry name" value="HNH78-like"/>
</dbReference>
<dbReference type="NCBIfam" id="TIGR02646">
    <property type="entry name" value="retron system putative HNH endonuclease"/>
    <property type="match status" value="1"/>
</dbReference>
<gene>
    <name type="ORF">Ga0124318_11283</name>
</gene>
<comment type="function">
    <text evidence="1">Putative HNH endonuclease component of antiviral defense system retron Ec83, composed of a non-coding RNA (ncRNA), a reverse transcriptase (RT), a probable ATPase and this protein. Expression of retron Ec78 confers protection against bacteriophage T2, T4 and T6. At multiplicity of infection (MOI) of 0.02 cultures slow growth when infected with T4 but do not collapse, at MOI 2 cultures enter growth stasis.</text>
</comment>
<keyword id="KW-0051">Antiviral defense</keyword>
<keyword id="KW-0255">Endonuclease</keyword>
<keyword id="KW-0378">Hydrolase</keyword>
<keyword id="KW-0540">Nuclease</keyword>
<name>HNH83_ECOLX</name>
<sequence length="258" mass="29964">MKRINKTAEDQFLINFKAQNPNGTWDEFRNHEQGILYKRLKQHICNDQMYLCAYCEIDLDRENEHEIKVEHFKSKSGSLPGGSNWHLEWSNLLAVCLGGTNTGDDFELPANLSCDSYKSHYEDKNKINDKDWTGKILLPLTLPDAHNFFTFEKVTGKLLPNESYCNTISIDGKPAAETLSIVTKTIEVLNLNCSRLNNARRKLLFHFNNCARERNLRKLHNLLLQWNQGEPKFFQTTRDIIIRDDRICQGLLNGTIRY</sequence>
<reference evidence="4" key="1">
    <citation type="submission" date="2015-08" db="EMBL/GenBank/DDBJ databases">
        <authorList>
            <person name="Hur Y.J."/>
        </authorList>
    </citation>
    <scope>NUCLEOTIDE SEQUENCE [LARGE SCALE GENOMIC DNA]</scope>
    <source>
        <strain>05-2753</strain>
    </source>
</reference>
<reference evidence="5" key="2">
    <citation type="journal article" date="1992" name="Mol. Microbiol.">
        <title>Structure and biosynthesis of unbranched multicopy single-stranded DNA by reverse transcriptase in a clinical Escherichia coli isolate.</title>
        <authorList>
            <person name="Lim D."/>
        </authorList>
    </citation>
    <scope>NUCLEOTIDE SEQUENCE [GENOMIC DNA] OF 1-32</scope>
    <source>
        <strain>Clinical strain 161</strain>
    </source>
</reference>
<reference key="3">
    <citation type="journal article" date="2020" name="Cell">
        <title>Bacterial Retrons Function In Anti-Phage Defense.</title>
        <authorList>
            <person name="Millman A."/>
            <person name="Bernheim A."/>
            <person name="Stokar-Avihail A."/>
            <person name="Fedorenko T."/>
            <person name="Voichek M."/>
            <person name="Leavitt A."/>
            <person name="Oppenheimer-Shaanan Y."/>
            <person name="Sorek R."/>
        </authorList>
    </citation>
    <scope>FUNCTION IN ANTIVIRAL DEFENSE</scope>
    <scope>IDENTIFICATION AS A RETRON</scope>
    <source>
        <strain>05-2753</strain>
    </source>
</reference>
<feature type="chain" id="PRO_0000456028" description="Retron Ec83 putative HNH endonuclease">
    <location>
        <begin position="1"/>
        <end position="258"/>
    </location>
</feature>
<organism>
    <name type="scientific">Escherichia coli</name>
    <dbReference type="NCBI Taxonomy" id="562"/>
    <lineage>
        <taxon>Bacteria</taxon>
        <taxon>Pseudomonadati</taxon>
        <taxon>Pseudomonadota</taxon>
        <taxon>Gammaproteobacteria</taxon>
        <taxon>Enterobacterales</taxon>
        <taxon>Enterobacteriaceae</taxon>
        <taxon>Escherichia</taxon>
    </lineage>
</organism>
<protein>
    <recommendedName>
        <fullName evidence="2">Retron Ec83 putative HNH endonuclease</fullName>
    </recommendedName>
    <alternativeName>
        <fullName evidence="3">TIGR02646 family protein</fullName>
    </alternativeName>
</protein>
<proteinExistence type="evidence at protein level"/>